<protein>
    <recommendedName>
        <fullName evidence="1">Small ribosomal subunit protein bS21</fullName>
    </recommendedName>
    <alternativeName>
        <fullName evidence="2">30S ribosomal protein S21</fullName>
    </alternativeName>
</protein>
<dbReference type="EMBL" id="CP000873">
    <property type="protein sequence ID" value="ABX64133.1"/>
    <property type="molecule type" value="Genomic_DNA"/>
</dbReference>
<dbReference type="RefSeq" id="WP_002965682.1">
    <property type="nucleotide sequence ID" value="NC_010104.1"/>
</dbReference>
<dbReference type="SMR" id="A9MCP6"/>
<dbReference type="GeneID" id="97533017"/>
<dbReference type="KEGG" id="bcs:BCAN_B0987"/>
<dbReference type="HOGENOM" id="CLU_159258_0_1_5"/>
<dbReference type="Proteomes" id="UP000001385">
    <property type="component" value="Chromosome II"/>
</dbReference>
<dbReference type="GO" id="GO:1990904">
    <property type="term" value="C:ribonucleoprotein complex"/>
    <property type="evidence" value="ECO:0007669"/>
    <property type="project" value="UniProtKB-KW"/>
</dbReference>
<dbReference type="GO" id="GO:0005840">
    <property type="term" value="C:ribosome"/>
    <property type="evidence" value="ECO:0007669"/>
    <property type="project" value="UniProtKB-KW"/>
</dbReference>
<dbReference type="GO" id="GO:0003735">
    <property type="term" value="F:structural constituent of ribosome"/>
    <property type="evidence" value="ECO:0007669"/>
    <property type="project" value="InterPro"/>
</dbReference>
<dbReference type="GO" id="GO:0006412">
    <property type="term" value="P:translation"/>
    <property type="evidence" value="ECO:0007669"/>
    <property type="project" value="UniProtKB-UniRule"/>
</dbReference>
<dbReference type="Gene3D" id="1.20.5.1150">
    <property type="entry name" value="Ribosomal protein S8"/>
    <property type="match status" value="1"/>
</dbReference>
<dbReference type="HAMAP" id="MF_00358">
    <property type="entry name" value="Ribosomal_bS21"/>
    <property type="match status" value="1"/>
</dbReference>
<dbReference type="InterPro" id="IPR001911">
    <property type="entry name" value="Ribosomal_bS21"/>
</dbReference>
<dbReference type="InterPro" id="IPR018278">
    <property type="entry name" value="Ribosomal_bS21_CS"/>
</dbReference>
<dbReference type="InterPro" id="IPR038380">
    <property type="entry name" value="Ribosomal_bS21_sf"/>
</dbReference>
<dbReference type="NCBIfam" id="TIGR00030">
    <property type="entry name" value="S21p"/>
    <property type="match status" value="1"/>
</dbReference>
<dbReference type="PANTHER" id="PTHR21109">
    <property type="entry name" value="MITOCHONDRIAL 28S RIBOSOMAL PROTEIN S21"/>
    <property type="match status" value="1"/>
</dbReference>
<dbReference type="PANTHER" id="PTHR21109:SF0">
    <property type="entry name" value="SMALL RIBOSOMAL SUBUNIT PROTEIN BS21M"/>
    <property type="match status" value="1"/>
</dbReference>
<dbReference type="Pfam" id="PF01165">
    <property type="entry name" value="Ribosomal_S21"/>
    <property type="match status" value="1"/>
</dbReference>
<dbReference type="PRINTS" id="PR00976">
    <property type="entry name" value="RIBOSOMALS21"/>
</dbReference>
<dbReference type="PROSITE" id="PS01181">
    <property type="entry name" value="RIBOSOMAL_S21"/>
    <property type="match status" value="1"/>
</dbReference>
<comment type="similarity">
    <text evidence="1">Belongs to the bacterial ribosomal protein bS21 family.</text>
</comment>
<feature type="chain" id="PRO_1000079398" description="Small ribosomal subunit protein bS21">
    <location>
        <begin position="1"/>
        <end position="75"/>
    </location>
</feature>
<reference key="1">
    <citation type="submission" date="2007-10" db="EMBL/GenBank/DDBJ databases">
        <title>Brucella canis ATCC 23365 whole genome shotgun sequencing project.</title>
        <authorList>
            <person name="Setubal J.C."/>
            <person name="Bowns C."/>
            <person name="Boyle S."/>
            <person name="Crasta O.R."/>
            <person name="Czar M.J."/>
            <person name="Dharmanolla C."/>
            <person name="Gillespie J.J."/>
            <person name="Kenyon R.W."/>
            <person name="Lu J."/>
            <person name="Mane S."/>
            <person name="Mohapatra S."/>
            <person name="Nagrani S."/>
            <person name="Purkayastha A."/>
            <person name="Rajasimha H.K."/>
            <person name="Shallom J.M."/>
            <person name="Shallom S."/>
            <person name="Shukla M."/>
            <person name="Snyder E.E."/>
            <person name="Sobral B.W."/>
            <person name="Wattam A.R."/>
            <person name="Will R."/>
            <person name="Williams K."/>
            <person name="Yoo H."/>
            <person name="Bruce D."/>
            <person name="Detter C."/>
            <person name="Munk C."/>
            <person name="Brettin T.S."/>
        </authorList>
    </citation>
    <scope>NUCLEOTIDE SEQUENCE [LARGE SCALE GENOMIC DNA]</scope>
    <source>
        <strain>ATCC 23365 / NCTC 10854 / RM-666</strain>
    </source>
</reference>
<organism>
    <name type="scientific">Brucella canis (strain ATCC 23365 / NCTC 10854 / RM-666)</name>
    <dbReference type="NCBI Taxonomy" id="483179"/>
    <lineage>
        <taxon>Bacteria</taxon>
        <taxon>Pseudomonadati</taxon>
        <taxon>Pseudomonadota</taxon>
        <taxon>Alphaproteobacteria</taxon>
        <taxon>Hyphomicrobiales</taxon>
        <taxon>Brucellaceae</taxon>
        <taxon>Brucella/Ochrobactrum group</taxon>
        <taxon>Brucella</taxon>
    </lineage>
</organism>
<proteinExistence type="inferred from homology"/>
<sequence>MQVLVRDNNVDQALRALKKKMQREGIFREMKMRGHYEKPSEKRAREKAEAVRRARKLARKRAQREGLIGGRTGAR</sequence>
<name>RS21_BRUC2</name>
<accession>A9MCP6</accession>
<gene>
    <name evidence="1" type="primary">rpsU</name>
    <name type="ordered locus">BCAN_B0987</name>
</gene>
<keyword id="KW-1185">Reference proteome</keyword>
<keyword id="KW-0687">Ribonucleoprotein</keyword>
<keyword id="KW-0689">Ribosomal protein</keyword>
<evidence type="ECO:0000255" key="1">
    <source>
        <dbReference type="HAMAP-Rule" id="MF_00358"/>
    </source>
</evidence>
<evidence type="ECO:0000305" key="2"/>